<evidence type="ECO:0000255" key="1">
    <source>
        <dbReference type="PROSITE-ProRule" id="PRU00723"/>
    </source>
</evidence>
<evidence type="ECO:0000256" key="2">
    <source>
        <dbReference type="SAM" id="MobiDB-lite"/>
    </source>
</evidence>
<evidence type="ECO:0000269" key="3">
    <source>
    </source>
</evidence>
<evidence type="ECO:0000269" key="4">
    <source>
    </source>
</evidence>
<evidence type="ECO:0000269" key="5">
    <source>
    </source>
</evidence>
<evidence type="ECO:0000269" key="6">
    <source>
    </source>
</evidence>
<evidence type="ECO:0000269" key="7">
    <source>
    </source>
</evidence>
<evidence type="ECO:0000269" key="8">
    <source>
    </source>
</evidence>
<evidence type="ECO:0000269" key="9">
    <source>
    </source>
</evidence>
<evidence type="ECO:0000269" key="10">
    <source>
    </source>
</evidence>
<evidence type="ECO:0000305" key="11"/>
<evidence type="ECO:0000312" key="12">
    <source>
        <dbReference type="WormBase" id="Y49E10.14a"/>
    </source>
</evidence>
<evidence type="ECO:0000312" key="13">
    <source>
        <dbReference type="WormBase" id="Y49E10.14b"/>
    </source>
</evidence>
<keyword id="KW-0025">Alternative splicing</keyword>
<keyword id="KW-0963">Cytoplasm</keyword>
<keyword id="KW-0206">Cytoskeleton</keyword>
<keyword id="KW-0238">DNA-binding</keyword>
<keyword id="KW-1017">Isopeptide bond</keyword>
<keyword id="KW-0479">Metal-binding</keyword>
<keyword id="KW-0539">Nucleus</keyword>
<keyword id="KW-1185">Reference proteome</keyword>
<keyword id="KW-0677">Repeat</keyword>
<keyword id="KW-0678">Repressor</keyword>
<keyword id="KW-0804">Transcription</keyword>
<keyword id="KW-0805">Transcription regulation</keyword>
<keyword id="KW-0832">Ubl conjugation</keyword>
<keyword id="KW-0862">Zinc</keyword>
<keyword id="KW-0863">Zinc-finger</keyword>
<dbReference type="EMBL" id="U62896">
    <property type="protein sequence ID" value="AAB17868.1"/>
    <property type="molecule type" value="mRNA"/>
</dbReference>
<dbReference type="EMBL" id="BX284603">
    <property type="protein sequence ID" value="CAB11564.2"/>
    <property type="molecule type" value="Genomic_DNA"/>
</dbReference>
<dbReference type="EMBL" id="BX284603">
    <property type="protein sequence ID" value="CBZ39492.1"/>
    <property type="molecule type" value="Genomic_DNA"/>
</dbReference>
<dbReference type="PIR" id="S71796">
    <property type="entry name" value="S71796"/>
</dbReference>
<dbReference type="PIR" id="T27052">
    <property type="entry name" value="T27052"/>
</dbReference>
<dbReference type="RefSeq" id="NP_001255166.1">
    <molecule id="Q94131-1"/>
    <property type="nucleotide sequence ID" value="NM_001268237.2"/>
</dbReference>
<dbReference type="RefSeq" id="NP_001255167.1">
    <molecule id="Q94131-2"/>
    <property type="nucleotide sequence ID" value="NM_001268238.3"/>
</dbReference>
<dbReference type="BioGRID" id="41846">
    <property type="interactions" value="56"/>
</dbReference>
<dbReference type="DIP" id="DIP-25777N"/>
<dbReference type="FunCoup" id="Q94131">
    <property type="interactions" value="1311"/>
</dbReference>
<dbReference type="IntAct" id="Q94131">
    <property type="interactions" value="27"/>
</dbReference>
<dbReference type="STRING" id="6239.Y49E10.14a.1"/>
<dbReference type="PaxDb" id="6239-Y49E10.14a.2"/>
<dbReference type="PeptideAtlas" id="Q94131"/>
<dbReference type="EnsemblMetazoa" id="Y49E10.14a.1">
    <molecule id="Q94131-1"/>
    <property type="protein sequence ID" value="Y49E10.14a.1"/>
    <property type="gene ID" value="WBGene00004027"/>
</dbReference>
<dbReference type="EnsemblMetazoa" id="Y49E10.14b.1">
    <molecule id="Q94131-2"/>
    <property type="protein sequence ID" value="Y49E10.14b.1"/>
    <property type="gene ID" value="WBGene00004027"/>
</dbReference>
<dbReference type="GeneID" id="176667"/>
<dbReference type="KEGG" id="cel:CELE_Y49E10.14"/>
<dbReference type="UCSC" id="Y49E10.14.1">
    <molecule id="Q94131-1"/>
    <property type="organism name" value="c. elegans"/>
</dbReference>
<dbReference type="AGR" id="WB:WBGene00004027"/>
<dbReference type="CTD" id="176667"/>
<dbReference type="WormBase" id="Y49E10.14a">
    <molecule id="Q94131-1"/>
    <property type="protein sequence ID" value="CE28134"/>
    <property type="gene ID" value="WBGene00004027"/>
    <property type="gene designation" value="pie-1"/>
</dbReference>
<dbReference type="WormBase" id="Y49E10.14b">
    <molecule id="Q94131-2"/>
    <property type="protein sequence ID" value="CE45773"/>
    <property type="gene ID" value="WBGene00004027"/>
    <property type="gene designation" value="pie-1"/>
</dbReference>
<dbReference type="eggNOG" id="KOG1677">
    <property type="taxonomic scope" value="Eukaryota"/>
</dbReference>
<dbReference type="HOGENOM" id="CLU_772173_0_0_1"/>
<dbReference type="InParanoid" id="Q94131"/>
<dbReference type="OMA" id="CPARIQN"/>
<dbReference type="OrthoDB" id="410307at2759"/>
<dbReference type="PhylomeDB" id="Q94131"/>
<dbReference type="Reactome" id="R-CEL-450385">
    <property type="pathway name" value="Butyrate Response Factor 1 (BRF1) binds and destabilizes mRNA"/>
</dbReference>
<dbReference type="Reactome" id="R-CEL-450513">
    <property type="pathway name" value="Tristetraprolin (TTP, ZFP36) binds and destabilizes mRNA"/>
</dbReference>
<dbReference type="SignaLink" id="Q94131"/>
<dbReference type="CD-CODE" id="1E117272">
    <property type="entry name" value="Centrosome"/>
</dbReference>
<dbReference type="CD-CODE" id="73A75392">
    <property type="entry name" value="P-granule"/>
</dbReference>
<dbReference type="PRO" id="PR:Q94131"/>
<dbReference type="Proteomes" id="UP000001940">
    <property type="component" value="Chromosome III"/>
</dbReference>
<dbReference type="Bgee" id="WBGene00004027">
    <property type="expression patterns" value="Expressed in germ line (C elegans) and 13 other cell types or tissues"/>
</dbReference>
<dbReference type="GO" id="GO:0005813">
    <property type="term" value="C:centrosome"/>
    <property type="evidence" value="ECO:0000314"/>
    <property type="project" value="WormBase"/>
</dbReference>
<dbReference type="GO" id="GO:0005829">
    <property type="term" value="C:cytosol"/>
    <property type="evidence" value="ECO:0000314"/>
    <property type="project" value="WormBase"/>
</dbReference>
<dbReference type="GO" id="GO:0005634">
    <property type="term" value="C:nucleus"/>
    <property type="evidence" value="ECO:0000314"/>
    <property type="project" value="UniProtKB"/>
</dbReference>
<dbReference type="GO" id="GO:0043186">
    <property type="term" value="C:P granule"/>
    <property type="evidence" value="ECO:0000314"/>
    <property type="project" value="WormBase"/>
</dbReference>
<dbReference type="GO" id="GO:0005819">
    <property type="term" value="C:spindle"/>
    <property type="evidence" value="ECO:0007669"/>
    <property type="project" value="UniProtKB-SubCell"/>
</dbReference>
<dbReference type="GO" id="GO:0003677">
    <property type="term" value="F:DNA binding"/>
    <property type="evidence" value="ECO:0007669"/>
    <property type="project" value="UniProtKB-KW"/>
</dbReference>
<dbReference type="GO" id="GO:0003730">
    <property type="term" value="F:mRNA 3'-UTR binding"/>
    <property type="evidence" value="ECO:0000318"/>
    <property type="project" value="GO_Central"/>
</dbReference>
<dbReference type="GO" id="GO:0008270">
    <property type="term" value="F:zinc ion binding"/>
    <property type="evidence" value="ECO:0007669"/>
    <property type="project" value="UniProtKB-KW"/>
</dbReference>
<dbReference type="GO" id="GO:0001709">
    <property type="term" value="P:cell fate determination"/>
    <property type="evidence" value="ECO:0000315"/>
    <property type="project" value="WormBase"/>
</dbReference>
<dbReference type="GO" id="GO:0006338">
    <property type="term" value="P:chromatin remodeling"/>
    <property type="evidence" value="ECO:0000314"/>
    <property type="project" value="UniProtKB"/>
</dbReference>
<dbReference type="GO" id="GO:0009880">
    <property type="term" value="P:embryonic pattern specification"/>
    <property type="evidence" value="ECO:0000315"/>
    <property type="project" value="WormBase"/>
</dbReference>
<dbReference type="GO" id="GO:0001704">
    <property type="term" value="P:formation of primary germ layer"/>
    <property type="evidence" value="ECO:0000315"/>
    <property type="project" value="WormBase"/>
</dbReference>
<dbReference type="GO" id="GO:0001933">
    <property type="term" value="P:negative regulation of protein phosphorylation"/>
    <property type="evidence" value="ECO:0000315"/>
    <property type="project" value="UniProtKB"/>
</dbReference>
<dbReference type="GO" id="GO:0000122">
    <property type="term" value="P:negative regulation of transcription by RNA polymerase II"/>
    <property type="evidence" value="ECO:0000314"/>
    <property type="project" value="WormBase"/>
</dbReference>
<dbReference type="FunFam" id="4.10.1000.10:FF:000003">
    <property type="entry name" value="Zinc finger CCCH domain-containing protein"/>
    <property type="match status" value="1"/>
</dbReference>
<dbReference type="Gene3D" id="4.10.1000.10">
    <property type="entry name" value="Zinc finger, CCCH-type"/>
    <property type="match status" value="2"/>
</dbReference>
<dbReference type="InterPro" id="IPR045877">
    <property type="entry name" value="ZFP36-like"/>
</dbReference>
<dbReference type="InterPro" id="IPR000571">
    <property type="entry name" value="Znf_CCCH"/>
</dbReference>
<dbReference type="InterPro" id="IPR036855">
    <property type="entry name" value="Znf_CCCH_sf"/>
</dbReference>
<dbReference type="PANTHER" id="PTHR12547">
    <property type="entry name" value="CCCH ZINC FINGER/TIS11-RELATED"/>
    <property type="match status" value="1"/>
</dbReference>
<dbReference type="PANTHER" id="PTHR12547:SF132">
    <property type="entry name" value="PHARYNX AND INTESTINE IN EXCESS PROTEIN 1"/>
    <property type="match status" value="1"/>
</dbReference>
<dbReference type="Pfam" id="PF00642">
    <property type="entry name" value="zf-CCCH"/>
    <property type="match status" value="2"/>
</dbReference>
<dbReference type="SMART" id="SM00356">
    <property type="entry name" value="ZnF_C3H1"/>
    <property type="match status" value="2"/>
</dbReference>
<dbReference type="SUPFAM" id="SSF90229">
    <property type="entry name" value="CCCH zinc finger"/>
    <property type="match status" value="1"/>
</dbReference>
<dbReference type="PROSITE" id="PS50103">
    <property type="entry name" value="ZF_C3H1"/>
    <property type="match status" value="2"/>
</dbReference>
<name>PIE1_CAEEL</name>
<organism>
    <name type="scientific">Caenorhabditis elegans</name>
    <dbReference type="NCBI Taxonomy" id="6239"/>
    <lineage>
        <taxon>Eukaryota</taxon>
        <taxon>Metazoa</taxon>
        <taxon>Ecdysozoa</taxon>
        <taxon>Nematoda</taxon>
        <taxon>Chromadorea</taxon>
        <taxon>Rhabditida</taxon>
        <taxon>Rhabditina</taxon>
        <taxon>Rhabditomorpha</taxon>
        <taxon>Rhabditoidea</taxon>
        <taxon>Rhabditidae</taxon>
        <taxon>Peloderinae</taxon>
        <taxon>Caenorhabditis</taxon>
    </lineage>
</organism>
<reference key="1">
    <citation type="journal article" date="1996" name="Nature">
        <title>The PIE-1 protein and germline specification in C. elegans embryos.</title>
        <authorList>
            <person name="Mello C.C."/>
            <person name="Schubert C."/>
            <person name="Draper B."/>
            <person name="Zhang W."/>
            <person name="Lobel R."/>
            <person name="Priess J.R."/>
        </authorList>
    </citation>
    <scope>NUCLEOTIDE SEQUENCE [MRNA] (ISOFORM A)</scope>
    <source>
        <strain>Bristol N2</strain>
    </source>
</reference>
<reference key="2">
    <citation type="journal article" date="1998" name="Science">
        <title>Genome sequence of the nematode C. elegans: a platform for investigating biology.</title>
        <authorList>
            <consortium name="The C. elegans sequencing consortium"/>
        </authorList>
    </citation>
    <scope>NUCLEOTIDE SEQUENCE [LARGE SCALE GENOMIC DNA]</scope>
    <source>
        <strain>Bristol N2</strain>
    </source>
</reference>
<reference key="3">
    <citation type="journal article" date="1992" name="Cell">
        <title>The pie-1 and mex-1 genes and maternal control of blastomere identity in early C. elegans embryos.</title>
        <authorList>
            <person name="Mello C.C."/>
            <person name="Draper B.W."/>
            <person name="Krause M."/>
            <person name="Weintraub H."/>
            <person name="Priess J.R."/>
        </authorList>
    </citation>
    <scope>FUNCTION</scope>
    <source>
        <strain>Bristol N2</strain>
    </source>
</reference>
<reference key="4">
    <citation type="journal article" date="1996" name="Nature">
        <title>Repression of gene expression in the embryonic germ lineage of C. elegans.</title>
        <authorList>
            <person name="Seydoux G."/>
            <person name="Mello C.C."/>
            <person name="Pettitt J."/>
            <person name="Wood W.B."/>
            <person name="Priess J.R."/>
            <person name="Fire A."/>
        </authorList>
    </citation>
    <scope>CHARACTERIZATION</scope>
</reference>
<reference key="5">
    <citation type="journal article" date="2000" name="Mol. Cell">
        <title>Asymmetric segregation of PIE-1 in C. elegans is mediated by two complementary mechanisms that act through separate PIE-1 protein domains.</title>
        <authorList>
            <person name="Reese K.J."/>
            <person name="Dunn M.A."/>
            <person name="Waddle J.A."/>
            <person name="Seydoux G."/>
        </authorList>
    </citation>
    <scope>FUNCTION</scope>
    <scope>DOMAIN</scope>
    <scope>SUBCELLULAR LOCATION</scope>
    <scope>DEVELOPMENTAL STAGE</scope>
    <source>
        <strain>JJ532</strain>
    </source>
</reference>
<reference key="6">
    <citation type="journal article" date="2001" name="Genes Dev.">
        <title>PIE-1 is a bifunctional protein that regulates maternal and zygotic gene expression in the embryonic germ line of Caenorhabditis elegans.</title>
        <authorList>
            <person name="Tenenhaus C."/>
            <person name="Subramaniam K."/>
            <person name="Dunn M.A."/>
            <person name="Seydoux G."/>
        </authorList>
    </citation>
    <scope>FUNCTION</scope>
    <scope>DOMAIN</scope>
    <scope>DISRUPTION PHENOTYPE</scope>
    <scope>MUTAGENESIS OF 69-ARG--LEU-72</scope>
    <source>
        <strain>JJ532</strain>
    </source>
</reference>
<reference key="7">
    <citation type="journal article" date="2002" name="Cell">
        <title>MEP-1 and a homolog of the NURD complex component Mi-2 act together to maintain germline-soma distinctions in C. elegans.</title>
        <authorList>
            <person name="Unhavaithaya Y."/>
            <person name="Shin T.H."/>
            <person name="Miliaras N."/>
            <person name="Lee J."/>
            <person name="Oyama T."/>
            <person name="Mello C.C."/>
        </authorList>
    </citation>
    <scope>FUNCTION</scope>
    <scope>INTERACTION WITH HDA-1; LET-418 AND MEP-1</scope>
</reference>
<reference key="8">
    <citation type="journal article" date="2003" name="Genes Dev.">
        <title>A model of repression: CTD analogs and PIE-1 inhibit transcriptional elongation by P-TEFb.</title>
        <authorList>
            <person name="Zhang F."/>
            <person name="Barboric M."/>
            <person name="Blackwell T.K."/>
            <person name="Peterlin B.M."/>
        </authorList>
    </citation>
    <scope>FUNCTION</scope>
    <scope>INTERACTION WITH CIT-1.1</scope>
</reference>
<reference key="9">
    <citation type="journal article" date="2008" name="Genetics">
        <title>Inhibition of transcription by the Caenorhabditis elegans germline protein PIE-1: genetic evidence for distinct mechanisms targeting initiation and elongation.</title>
        <authorList>
            <person name="Ghosh D."/>
            <person name="Seydoux G."/>
        </authorList>
    </citation>
    <scope>FUNCTION</scope>
    <scope>INTERACTION WITH CIT-1.1</scope>
    <scope>SUBCELLULAR LOCATION</scope>
</reference>
<reference key="10">
    <citation type="journal article" date="2018" name="G3 (Bethesda)">
        <title>PIE-1 Translation in the Germline Lineage Contributes to PIE-1 Asymmetry in the Early Caenorhabditis elegans Embryo.</title>
        <authorList>
            <person name="Gauvin T.J."/>
            <person name="Han B."/>
            <person name="Sun M.J."/>
            <person name="Griffin E.E."/>
        </authorList>
    </citation>
    <scope>SUBCELLULAR LOCATION</scope>
    <scope>DEVELOPMENTAL STAGE</scope>
</reference>
<reference evidence="11" key="11">
    <citation type="journal article" date="2021" name="Elife">
        <title>PIE-1 SUMOylation promotes germline fates and piRNA-dependent silencing in C. elegans.</title>
        <authorList>
            <person name="Kim H."/>
            <person name="Ding Y.H."/>
            <person name="Lu S."/>
            <person name="Zuo M.Q."/>
            <person name="Tan W."/>
            <person name="Conte D. Jr."/>
            <person name="Dong M.Q."/>
            <person name="Mello C.C."/>
        </authorList>
    </citation>
    <scope>FUNCTION</scope>
    <scope>SUBCELLULAR LOCATION</scope>
    <scope>DEVELOPMENTAL STAGE</scope>
    <scope>SUMOYLATION AT LYS-68</scope>
    <scope>DISRUPTION PHENOTYPE</scope>
    <scope>MUTAGENESIS OF LYS-68</scope>
</reference>
<gene>
    <name evidence="12" type="primary">pie-1</name>
    <name evidence="12" type="synonym">pic-1</name>
    <name evidence="12" type="ORF">Y49E10.14</name>
</gene>
<feature type="chain" id="PRO_0000089176" description="Pharynx and intestine in excess protein 1">
    <location>
        <begin position="1"/>
        <end position="335"/>
    </location>
</feature>
<feature type="zinc finger region" description="C3H1-type 1" evidence="1">
    <location>
        <begin position="98"/>
        <end position="126"/>
    </location>
</feature>
<feature type="zinc finger region" description="C3H1-type 2" evidence="1">
    <location>
        <begin position="184"/>
        <end position="211"/>
    </location>
</feature>
<feature type="region of interest" description="Disordered" evidence="2">
    <location>
        <begin position="130"/>
        <end position="188"/>
    </location>
</feature>
<feature type="region of interest" description="Required for inhibition of Ser-2 phosphorylation">
    <location>
        <begin position="288"/>
        <end position="291"/>
    </location>
</feature>
<feature type="compositionally biased region" description="Basic and acidic residues" evidence="2">
    <location>
        <begin position="130"/>
        <end position="156"/>
    </location>
</feature>
<feature type="compositionally biased region" description="Polar residues" evidence="2">
    <location>
        <begin position="158"/>
        <end position="167"/>
    </location>
</feature>
<feature type="compositionally biased region" description="Polar residues" evidence="2">
    <location>
        <begin position="177"/>
        <end position="187"/>
    </location>
</feature>
<feature type="cross-link" description="Glycyl lysine isopeptide (Lys-Gly) (interchain with G-Cter in SUMO)" evidence="10">
    <location>
        <position position="68"/>
    </location>
</feature>
<feature type="splice variant" id="VSP_044040" description="In isoform b." evidence="11">
    <location>
        <begin position="1"/>
        <end position="211"/>
    </location>
</feature>
<feature type="mutagenesis site" description="Abolishes pie-1 sumoylation, reduces the sumoylation of hda-1, reduces interaction of hda-1 with mep-1, reduces fertility, reduces embryonic viability and increases histone acetylation in gonads." evidence="10">
    <original>K</original>
    <variation>R</variation>
    <location>
        <position position="68"/>
    </location>
</feature>
<feature type="mutagenesis site" description="Disrupts efficient nucleus localization and transcriptional repression in germline blastomeres." evidence="4">
    <original>REAL</original>
    <variation>AEAA</variation>
    <location>
        <begin position="69"/>
        <end position="72"/>
    </location>
</feature>
<protein>
    <recommendedName>
        <fullName>Pharynx and intestine in excess protein 1</fullName>
        <shortName>Protein pie-1</shortName>
    </recommendedName>
</protein>
<comment type="function">
    <text evidence="3 4 5 6 7 8 10">Maternally provided pie-1 is required for germline cell fate determination. Functions as a repressor of RNA polymerase II-dependent gene expression in the developing germline. Required for expression of nos-2 in P4 germline blastomere cells. Inhibits the histone deacetylase activity of hda-1 (PubMed:34003111). Represses transcriptional activation of cdk-9 and cit-1.1, which are members of the P-TEFb complex. Acts redundantly with gei-17 to promote piRNA-mediated silencing and fertility in adult germline (PubMed:34003111). Promotes the sumoylation of hda-1 in adult animals but not in embryos thereby regulating its interaction with mep-1 (PubMed:34003111).</text>
</comment>
<comment type="subunit">
    <text evidence="5 6 8">Interacts with hda-1, let-418 and mep-1. Interacts (via C terminus) with cit-1.1 (via C terminus).</text>
</comment>
<comment type="interaction">
    <interactant intactId="EBI-300501">
        <id>Q94131</id>
    </interactant>
    <interactant intactId="EBI-2415565">
        <id>Q22805</id>
        <label>CELE_T26A8.4</label>
    </interactant>
    <organismsDiffer>false</organismsDiffer>
    <experiments>3</experiments>
</comment>
<comment type="interaction">
    <interactant intactId="EBI-300501">
        <id>Q94131</id>
    </interactant>
    <interactant intactId="EBI-318045">
        <id>O17695</id>
        <label>hda-1</label>
    </interactant>
    <organismsDiffer>false</organismsDiffer>
    <experiments>3</experiments>
</comment>
<comment type="interaction">
    <interactant intactId="EBI-300501">
        <id>Q94131</id>
    </interactant>
    <interactant intactId="EBI-319858">
        <id>Q21502</id>
        <label>mep-1</label>
    </interactant>
    <organismsDiffer>false</organismsDiffer>
    <experiments>3</experiments>
</comment>
<comment type="interaction">
    <interactant intactId="EBI-300501">
        <id>Q94131</id>
    </interactant>
    <interactant intactId="EBI-300497">
        <id>P34482</id>
        <label>zif-1</label>
    </interactant>
    <organismsDiffer>false</organismsDiffer>
    <experiments>2</experiments>
</comment>
<comment type="subcellular location">
    <subcellularLocation>
        <location evidence="9 10">Nucleus</location>
    </subcellularLocation>
    <subcellularLocation>
        <location evidence="9 10">Cytoplasm</location>
    </subcellularLocation>
    <subcellularLocation>
        <location>Cytoplasm</location>
        <location>Cytoskeleton</location>
        <location>Microtubule organizing center</location>
        <location>Centrosome</location>
    </subcellularLocation>
    <subcellularLocation>
        <location>Cytoplasm</location>
        <location>Cytoskeleton</location>
        <location>Spindle</location>
    </subcellularLocation>
    <subcellularLocation>
        <location evidence="10">Cytoplasmic granule</location>
    </subcellularLocation>
    <text>Initially associates with both centrosomes of the mitotic spindle. Rapidly disappears from the centrosome destined for the somatic daughter and persists in the centrosome of the daughter that becomes the next germline blastomere. Accumulates in larger cytoplasmic granules (P granules), which are visible around the nuclei in the micrographs.</text>
</comment>
<comment type="alternative products">
    <event type="alternative splicing"/>
    <isoform>
        <id>Q94131-1</id>
        <name evidence="12">a</name>
        <sequence type="displayed"/>
    </isoform>
    <isoform>
        <id>Q94131-2</id>
        <name evidence="13">b</name>
        <sequence type="described" ref="VSP_044040"/>
    </isoform>
</comment>
<comment type="developmental stage">
    <text evidence="3 9 10">Expressed in 1, 2 and 4-cell embryos (at protein level) (PubMed:10983990, PubMed:30279189). Expression increases between P0 (the zygote) and P2 blastomeres due to its asymmetric segregation in P1 and P2 blastomeres, its degradation in somatic cells and its translation in the P lineage (at protein level) (PubMed:30279189). Expressed in the germline and in the germ cells of adults (PubMed:34003111). Increases gradually during oocyte maturation (PubMed:34003111).</text>
</comment>
<comment type="domain">
    <text>The C3H1-type 1 domain is required for degradation in somatic blastomeres.</text>
</comment>
<comment type="domain">
    <text>The C3H1-type 2 domain targets the protein to P granules, is involved in germ cell positioning in embryos and is required for default nos-2 expression.</text>
</comment>
<comment type="PTM">
    <text evidence="10">Sumoylated in adult germ cells.</text>
</comment>
<comment type="disruption phenotype">
    <text evidence="4 10">Disrupts blastomere cell fate. Excessive pharyngeal cells produced during embryogenesis. Reduced expression of nos-2 in P4 germline blastomeres and absence of nos-2 protein. Does not affect embryo viability or brood size of animals (PubMed:34003111). Abolishes the sumoylation of hda-1 (PubMed:34003111).</text>
</comment>
<proteinExistence type="evidence at protein level"/>
<sequence length="335" mass="38364">MAQTKPIAEQMAALNNSDDTSFAADRSNSLLNATCPARIQNSVDQRKINRSFNDSLSSGYSGKWLRPKREALKITPLAQIDEAPATKRHSSAKDKHTEYKTRLCDAFRREGYCPYNDNCTYAHGQDELRVPRRRQEYYSRDPPRERRDSRSRRDDVDTTINRSSSSASKHHDENRRPSNNHGSSNRRQICHNFERGNCRYGPRCRFIHVEQMQHFNANATVYAPPSSDCPPPIAYYHHHPQHQQQFLPFPMPYFLAPPPQAQQGAPFPVQYIPQQHDLMNSQPMYAPMAPTYYYQPINSNGMPMMDVTIDPNATGGAFEVFPDGFFSQPPPTIIS</sequence>
<accession>Q94131</accession>
<accession>E9P8A6</accession>
<accession>Q9XTT5</accession>